<evidence type="ECO:0000250" key="1"/>
<evidence type="ECO:0000255" key="2">
    <source>
        <dbReference type="PROSITE-ProRule" id="PRU00464"/>
    </source>
</evidence>
<evidence type="ECO:0000256" key="3">
    <source>
        <dbReference type="SAM" id="MobiDB-lite"/>
    </source>
</evidence>
<evidence type="ECO:0000305" key="4"/>
<reference key="1">
    <citation type="submission" date="2005-03" db="EMBL/GenBank/DDBJ databases">
        <title>Annotation of the Saccharomyces cerevisiae RM11-1a genome.</title>
        <authorList>
            <consortium name="The Broad Institute Genome Sequencing Platform"/>
            <person name="Birren B.W."/>
            <person name="Lander E.S."/>
            <person name="Galagan J.E."/>
            <person name="Nusbaum C."/>
            <person name="Devon K."/>
            <person name="Cuomo C."/>
            <person name="Jaffe D.B."/>
            <person name="Butler J."/>
            <person name="Alvarez P."/>
            <person name="Gnerre S."/>
            <person name="Grabherr M."/>
            <person name="Kleber M."/>
            <person name="Mauceli E.W."/>
            <person name="Brockman W."/>
            <person name="MacCallum I.A."/>
            <person name="Rounsley S."/>
            <person name="Young S.K."/>
            <person name="LaButti K."/>
            <person name="Pushparaj V."/>
            <person name="DeCaprio D."/>
            <person name="Crawford M."/>
            <person name="Koehrsen M."/>
            <person name="Engels R."/>
            <person name="Montgomery P."/>
            <person name="Pearson M."/>
            <person name="Howarth C."/>
            <person name="Larson L."/>
            <person name="Luoma S."/>
            <person name="White J."/>
            <person name="O'Leary S."/>
            <person name="Kodira C.D."/>
            <person name="Zeng Q."/>
            <person name="Yandava C."/>
            <person name="Alvarado L."/>
            <person name="Pratt S."/>
            <person name="Kruglyak L."/>
        </authorList>
    </citation>
    <scope>NUCLEOTIDE SEQUENCE [LARGE SCALE GENOMIC DNA]</scope>
    <source>
        <strain>RM11-1a</strain>
    </source>
</reference>
<proteinExistence type="inferred from homology"/>
<protein>
    <recommendedName>
        <fullName>Bis(5'-adenosyl)-triphosphatase</fullName>
        <ecNumber>3.6.1.29</ecNumber>
    </recommendedName>
    <alternativeName>
        <fullName>AP3A hydrolase</fullName>
        <shortName>AP3Aase</shortName>
    </alternativeName>
    <alternativeName>
        <fullName>Diadenosine 5',5'''-P1,P3-triphosphate hydrolase</fullName>
    </alternativeName>
    <alternativeName>
        <fullName>Dinucleosidetriphosphatase</fullName>
    </alternativeName>
    <alternativeName>
        <fullName>Hit family protein 2</fullName>
    </alternativeName>
</protein>
<name>HNT2_YEAS1</name>
<accession>B3LFZ1</accession>
<organism>
    <name type="scientific">Saccharomyces cerevisiae (strain RM11-1a)</name>
    <name type="common">Baker's yeast</name>
    <dbReference type="NCBI Taxonomy" id="285006"/>
    <lineage>
        <taxon>Eukaryota</taxon>
        <taxon>Fungi</taxon>
        <taxon>Dikarya</taxon>
        <taxon>Ascomycota</taxon>
        <taxon>Saccharomycotina</taxon>
        <taxon>Saccharomycetes</taxon>
        <taxon>Saccharomycetales</taxon>
        <taxon>Saccharomycetaceae</taxon>
        <taxon>Saccharomyces</taxon>
    </lineage>
</organism>
<dbReference type="EC" id="3.6.1.29"/>
<dbReference type="EMBL" id="CH408043">
    <property type="protein sequence ID" value="EDV08020.1"/>
    <property type="status" value="ALT_INIT"/>
    <property type="molecule type" value="Genomic_DNA"/>
</dbReference>
<dbReference type="SMR" id="B3LFZ1"/>
<dbReference type="HOGENOM" id="CLU_056776_7_2_1"/>
<dbReference type="OrthoDB" id="13869at4893"/>
<dbReference type="Proteomes" id="UP000008335">
    <property type="component" value="Unassembled WGS sequence"/>
</dbReference>
<dbReference type="GO" id="GO:0005739">
    <property type="term" value="C:mitochondrion"/>
    <property type="evidence" value="ECO:0007669"/>
    <property type="project" value="UniProtKB-SubCell"/>
</dbReference>
<dbReference type="GO" id="GO:0005634">
    <property type="term" value="C:nucleus"/>
    <property type="evidence" value="ECO:0007669"/>
    <property type="project" value="UniProtKB-SubCell"/>
</dbReference>
<dbReference type="GO" id="GO:0047710">
    <property type="term" value="F:bis(5'-adenosyl)-triphosphatase activity"/>
    <property type="evidence" value="ECO:0007669"/>
    <property type="project" value="UniProtKB-EC"/>
</dbReference>
<dbReference type="GO" id="GO:0000166">
    <property type="term" value="F:nucleotide binding"/>
    <property type="evidence" value="ECO:0007669"/>
    <property type="project" value="UniProtKB-KW"/>
</dbReference>
<dbReference type="CDD" id="cd01275">
    <property type="entry name" value="FHIT"/>
    <property type="match status" value="1"/>
</dbReference>
<dbReference type="Gene3D" id="3.30.428.10">
    <property type="entry name" value="HIT-like"/>
    <property type="match status" value="1"/>
</dbReference>
<dbReference type="InterPro" id="IPR051884">
    <property type="entry name" value="Bis(5'-adenosyl)-TPase_reg"/>
</dbReference>
<dbReference type="InterPro" id="IPR039383">
    <property type="entry name" value="FHIT"/>
</dbReference>
<dbReference type="InterPro" id="IPR019808">
    <property type="entry name" value="Histidine_triad_CS"/>
</dbReference>
<dbReference type="InterPro" id="IPR011146">
    <property type="entry name" value="HIT-like"/>
</dbReference>
<dbReference type="InterPro" id="IPR036265">
    <property type="entry name" value="HIT-like_sf"/>
</dbReference>
<dbReference type="PANTHER" id="PTHR46243">
    <property type="entry name" value="BIS(5'-ADENOSYL)-TRIPHOSPHATASE"/>
    <property type="match status" value="1"/>
</dbReference>
<dbReference type="PANTHER" id="PTHR46243:SF1">
    <property type="entry name" value="BIS(5'-ADENOSYL)-TRIPHOSPHATASE"/>
    <property type="match status" value="1"/>
</dbReference>
<dbReference type="Pfam" id="PF01230">
    <property type="entry name" value="HIT"/>
    <property type="match status" value="1"/>
</dbReference>
<dbReference type="SUPFAM" id="SSF54197">
    <property type="entry name" value="HIT-like"/>
    <property type="match status" value="1"/>
</dbReference>
<dbReference type="PROSITE" id="PS00892">
    <property type="entry name" value="HIT_1"/>
    <property type="match status" value="1"/>
</dbReference>
<dbReference type="PROSITE" id="PS51084">
    <property type="entry name" value="HIT_2"/>
    <property type="match status" value="1"/>
</dbReference>
<gene>
    <name type="primary">HNT2</name>
    <name type="synonym">APH1</name>
    <name type="ORF">SCRG_00225</name>
</gene>
<sequence>MNKPIYFSKFLVTEQVFYKSKYTYALVNLKPIVPGHVLIVPLRTTVLNLSDLTMPESQDYFKTLQLIHRFIKWQYKADSINVAIQDGPEAGQSVPHLHTHIIPRYKINNVGDLIYDKLDHWDGNGTLTDWQGRRDEYLGVGGRQARKNNSTSATVDGDELSQGPNVLKPDSQRKVRALTEMKKEAEDLQARLEEFVSSDPGLTQWL</sequence>
<comment type="function">
    <text evidence="1">Cleaves A-5'-PPP-5'A to yield AMP and ADP. Can cleave all dinucleoside polyphosphates, provided the phosphate chain contains at least 3 phosphates and that 1 of the 2 bases composing the nucleotide is a purine. Is most effective on dinucleoside triphosphates. Negatively regulates intracellular dinucleoside polyphosphate levels, which elevate following heat shock (By similarity).</text>
</comment>
<comment type="catalytic activity">
    <reaction>
        <text>P(1),P(3)-bis(5'-adenosyl) triphosphate + H2O = AMP + ADP + 2 H(+)</text>
        <dbReference type="Rhea" id="RHEA:13893"/>
        <dbReference type="ChEBI" id="CHEBI:15377"/>
        <dbReference type="ChEBI" id="CHEBI:15378"/>
        <dbReference type="ChEBI" id="CHEBI:58529"/>
        <dbReference type="ChEBI" id="CHEBI:456215"/>
        <dbReference type="ChEBI" id="CHEBI:456216"/>
        <dbReference type="EC" id="3.6.1.29"/>
    </reaction>
</comment>
<comment type="cofactor">
    <cofactor evidence="1">
        <name>Mn(2+)</name>
        <dbReference type="ChEBI" id="CHEBI:29035"/>
    </cofactor>
    <text evidence="1">Divalent metal cations. Mn(2+) is the preferred ion.</text>
</comment>
<comment type="subunit">
    <text evidence="1">Homodimer.</text>
</comment>
<comment type="subcellular location">
    <subcellularLocation>
        <location evidence="1">Cytoplasm</location>
    </subcellularLocation>
    <subcellularLocation>
        <location evidence="1">Nucleus</location>
    </subcellularLocation>
    <subcellularLocation>
        <location evidence="1">Mitochondrion</location>
    </subcellularLocation>
</comment>
<comment type="sequence caution" evidence="4">
    <conflict type="erroneous initiation">
        <sequence resource="EMBL-CDS" id="EDV08020"/>
    </conflict>
</comment>
<keyword id="KW-0963">Cytoplasm</keyword>
<keyword id="KW-0378">Hydrolase</keyword>
<keyword id="KW-0496">Mitochondrion</keyword>
<keyword id="KW-0547">Nucleotide-binding</keyword>
<keyword id="KW-0539">Nucleus</keyword>
<feature type="chain" id="PRO_0000392103" description="Bis(5'-adenosyl)-triphosphatase">
    <location>
        <begin position="1"/>
        <end position="206"/>
    </location>
</feature>
<feature type="domain" description="HIT" evidence="2">
    <location>
        <begin position="3"/>
        <end position="115"/>
    </location>
</feature>
<feature type="region of interest" description="Disordered" evidence="3">
    <location>
        <begin position="143"/>
        <end position="164"/>
    </location>
</feature>
<feature type="short sequence motif" description="Histidine triad motif">
    <location>
        <begin position="96"/>
        <end position="100"/>
    </location>
</feature>
<feature type="active site" description="Tele-AMP-histidine intermediate" evidence="1">
    <location>
        <position position="98"/>
    </location>
</feature>